<protein>
    <recommendedName>
        <fullName evidence="1">Chaperone protein HtpG</fullName>
    </recommendedName>
    <alternativeName>
        <fullName evidence="1">Heat shock protein HtpG</fullName>
    </alternativeName>
    <alternativeName>
        <fullName evidence="1">High temperature protein G</fullName>
    </alternativeName>
</protein>
<sequence length="637" mass="71729">MTQSVHAETHGFQTEVKQLLSLMAHSLYSNKEVFLRELISNASDAADKLRFKALSDASLFENDGQLRVRLVVDKENRTLTISDNGIGMTRDQVIEHLGTIAKSGTAEFFKNLSGDQGRDSQLIGQFGVGFYSAFIVADKVTVVSRAAGTAPEQGVQWESEGEGSFTVADVTKEGRGTDVILHLRAEEEEFLDDWRLRAVVAKYSDHISVPVEMFKEGTPDREEDGETVVGTPGEWEQVNRATALWTRNPKEIKDEEYQEFYKHVAHDFEDPLLWGHNRVEGAQEYTSLLYVPARAPFDLYNREQKHGLKLYVQRVFIMDDAEQFMPTYLRFVKGVLDSNDLPLNVSREILQDNKVTVSLRKACSKRVLTMLAKLAKDDAEKYAKFWSEFGNVLKEGPAEDYANREEIAKLLRFASTAGEGEAQTVSLEDYVGRMKEGQQKIYYITADSFAAAKNSPHLEIFRKKGVEVLLMWERVDEWLMSHLTEFDGKQLVSVTRGELDLGDLEDEASKQAQEEAEKANAGLVERVKTSLGEAVKEVRVTHRLTDSPSCIVTDNHGMSTQMIKLMRAAGQPVPEQKYILELNPDHALVKKLDTIEDEALFGEWVTLLHEQAQLAEQGGLNDPASFVSRINRLLLQA</sequence>
<feature type="chain" id="PRO_1000060521" description="Chaperone protein HtpG">
    <location>
        <begin position="1"/>
        <end position="637"/>
    </location>
</feature>
<feature type="region of interest" description="A; substrate-binding" evidence="1">
    <location>
        <begin position="1"/>
        <end position="347"/>
    </location>
</feature>
<feature type="region of interest" description="B" evidence="1">
    <location>
        <begin position="348"/>
        <end position="564"/>
    </location>
</feature>
<feature type="region of interest" description="C" evidence="1">
    <location>
        <begin position="565"/>
        <end position="637"/>
    </location>
</feature>
<organism>
    <name type="scientific">Aeromonas salmonicida (strain A449)</name>
    <dbReference type="NCBI Taxonomy" id="382245"/>
    <lineage>
        <taxon>Bacteria</taxon>
        <taxon>Pseudomonadati</taxon>
        <taxon>Pseudomonadota</taxon>
        <taxon>Gammaproteobacteria</taxon>
        <taxon>Aeromonadales</taxon>
        <taxon>Aeromonadaceae</taxon>
        <taxon>Aeromonas</taxon>
    </lineage>
</organism>
<evidence type="ECO:0000255" key="1">
    <source>
        <dbReference type="HAMAP-Rule" id="MF_00505"/>
    </source>
</evidence>
<dbReference type="EMBL" id="CP000644">
    <property type="protein sequence ID" value="ABO89902.1"/>
    <property type="molecule type" value="Genomic_DNA"/>
</dbReference>
<dbReference type="RefSeq" id="WP_005315218.1">
    <property type="nucleotide sequence ID" value="NC_009348.1"/>
</dbReference>
<dbReference type="SMR" id="A4SLY0"/>
<dbReference type="KEGG" id="asa:ASA_1826"/>
<dbReference type="eggNOG" id="COG0326">
    <property type="taxonomic scope" value="Bacteria"/>
</dbReference>
<dbReference type="HOGENOM" id="CLU_006684_3_0_6"/>
<dbReference type="Proteomes" id="UP000000225">
    <property type="component" value="Chromosome"/>
</dbReference>
<dbReference type="GO" id="GO:0005737">
    <property type="term" value="C:cytoplasm"/>
    <property type="evidence" value="ECO:0007669"/>
    <property type="project" value="UniProtKB-SubCell"/>
</dbReference>
<dbReference type="GO" id="GO:0005524">
    <property type="term" value="F:ATP binding"/>
    <property type="evidence" value="ECO:0007669"/>
    <property type="project" value="UniProtKB-UniRule"/>
</dbReference>
<dbReference type="GO" id="GO:0016887">
    <property type="term" value="F:ATP hydrolysis activity"/>
    <property type="evidence" value="ECO:0007669"/>
    <property type="project" value="InterPro"/>
</dbReference>
<dbReference type="GO" id="GO:0140662">
    <property type="term" value="F:ATP-dependent protein folding chaperone"/>
    <property type="evidence" value="ECO:0007669"/>
    <property type="project" value="InterPro"/>
</dbReference>
<dbReference type="GO" id="GO:0051082">
    <property type="term" value="F:unfolded protein binding"/>
    <property type="evidence" value="ECO:0007669"/>
    <property type="project" value="UniProtKB-UniRule"/>
</dbReference>
<dbReference type="CDD" id="cd16927">
    <property type="entry name" value="HATPase_Hsp90-like"/>
    <property type="match status" value="1"/>
</dbReference>
<dbReference type="FunFam" id="3.30.230.80:FF:000002">
    <property type="entry name" value="Molecular chaperone HtpG"/>
    <property type="match status" value="1"/>
</dbReference>
<dbReference type="FunFam" id="3.30.565.10:FF:000009">
    <property type="entry name" value="Molecular chaperone HtpG"/>
    <property type="match status" value="1"/>
</dbReference>
<dbReference type="Gene3D" id="3.30.230.80">
    <property type="match status" value="1"/>
</dbReference>
<dbReference type="Gene3D" id="3.40.50.11260">
    <property type="match status" value="1"/>
</dbReference>
<dbReference type="Gene3D" id="1.20.120.790">
    <property type="entry name" value="Heat shock protein 90, C-terminal domain"/>
    <property type="match status" value="1"/>
</dbReference>
<dbReference type="Gene3D" id="3.30.565.10">
    <property type="entry name" value="Histidine kinase-like ATPase, C-terminal domain"/>
    <property type="match status" value="1"/>
</dbReference>
<dbReference type="HAMAP" id="MF_00505">
    <property type="entry name" value="HSP90"/>
    <property type="match status" value="1"/>
</dbReference>
<dbReference type="InterPro" id="IPR036890">
    <property type="entry name" value="HATPase_C_sf"/>
</dbReference>
<dbReference type="InterPro" id="IPR019805">
    <property type="entry name" value="Heat_shock_protein_90_CS"/>
</dbReference>
<dbReference type="InterPro" id="IPR037196">
    <property type="entry name" value="HSP90_C"/>
</dbReference>
<dbReference type="InterPro" id="IPR001404">
    <property type="entry name" value="Hsp90_fam"/>
</dbReference>
<dbReference type="InterPro" id="IPR020575">
    <property type="entry name" value="Hsp90_N"/>
</dbReference>
<dbReference type="InterPro" id="IPR020568">
    <property type="entry name" value="Ribosomal_Su5_D2-typ_SF"/>
</dbReference>
<dbReference type="NCBIfam" id="NF003555">
    <property type="entry name" value="PRK05218.1"/>
    <property type="match status" value="1"/>
</dbReference>
<dbReference type="PANTHER" id="PTHR11528">
    <property type="entry name" value="HEAT SHOCK PROTEIN 90 FAMILY MEMBER"/>
    <property type="match status" value="1"/>
</dbReference>
<dbReference type="Pfam" id="PF13589">
    <property type="entry name" value="HATPase_c_3"/>
    <property type="match status" value="1"/>
</dbReference>
<dbReference type="Pfam" id="PF00183">
    <property type="entry name" value="HSP90"/>
    <property type="match status" value="1"/>
</dbReference>
<dbReference type="PIRSF" id="PIRSF002583">
    <property type="entry name" value="Hsp90"/>
    <property type="match status" value="1"/>
</dbReference>
<dbReference type="PRINTS" id="PR00775">
    <property type="entry name" value="HEATSHOCK90"/>
</dbReference>
<dbReference type="SMART" id="SM00387">
    <property type="entry name" value="HATPase_c"/>
    <property type="match status" value="1"/>
</dbReference>
<dbReference type="SUPFAM" id="SSF55874">
    <property type="entry name" value="ATPase domain of HSP90 chaperone/DNA topoisomerase II/histidine kinase"/>
    <property type="match status" value="1"/>
</dbReference>
<dbReference type="SUPFAM" id="SSF110942">
    <property type="entry name" value="HSP90 C-terminal domain"/>
    <property type="match status" value="1"/>
</dbReference>
<dbReference type="SUPFAM" id="SSF54211">
    <property type="entry name" value="Ribosomal protein S5 domain 2-like"/>
    <property type="match status" value="1"/>
</dbReference>
<dbReference type="PROSITE" id="PS00298">
    <property type="entry name" value="HSP90"/>
    <property type="match status" value="1"/>
</dbReference>
<accession>A4SLY0</accession>
<proteinExistence type="inferred from homology"/>
<keyword id="KW-0067">ATP-binding</keyword>
<keyword id="KW-0143">Chaperone</keyword>
<keyword id="KW-0963">Cytoplasm</keyword>
<keyword id="KW-0547">Nucleotide-binding</keyword>
<keyword id="KW-0346">Stress response</keyword>
<name>HTPG_AERS4</name>
<reference key="1">
    <citation type="journal article" date="2008" name="BMC Genomics">
        <title>The genome of Aeromonas salmonicida subsp. salmonicida A449: insights into the evolution of a fish pathogen.</title>
        <authorList>
            <person name="Reith M.E."/>
            <person name="Singh R.K."/>
            <person name="Curtis B."/>
            <person name="Boyd J.M."/>
            <person name="Bouevitch A."/>
            <person name="Kimball J."/>
            <person name="Munholland J."/>
            <person name="Murphy C."/>
            <person name="Sarty D."/>
            <person name="Williams J."/>
            <person name="Nash J.H."/>
            <person name="Johnson S.C."/>
            <person name="Brown L.L."/>
        </authorList>
    </citation>
    <scope>NUCLEOTIDE SEQUENCE [LARGE SCALE GENOMIC DNA]</scope>
    <source>
        <strain>A449</strain>
    </source>
</reference>
<comment type="function">
    <text evidence="1">Molecular chaperone. Has ATPase activity.</text>
</comment>
<comment type="subunit">
    <text evidence="1">Homodimer.</text>
</comment>
<comment type="subcellular location">
    <subcellularLocation>
        <location evidence="1">Cytoplasm</location>
    </subcellularLocation>
</comment>
<comment type="similarity">
    <text evidence="1">Belongs to the heat shock protein 90 family.</text>
</comment>
<gene>
    <name evidence="1" type="primary">htpG</name>
    <name type="ordered locus">ASA_1826</name>
</gene>